<organism>
    <name type="scientific">Methanosarcina mazei (strain ATCC BAA-159 / DSM 3647 / Goe1 / Go1 / JCM 11833 / OCM 88)</name>
    <name type="common">Methanosarcina frisia</name>
    <dbReference type="NCBI Taxonomy" id="192952"/>
    <lineage>
        <taxon>Archaea</taxon>
        <taxon>Methanobacteriati</taxon>
        <taxon>Methanobacteriota</taxon>
        <taxon>Stenosarchaea group</taxon>
        <taxon>Methanomicrobia</taxon>
        <taxon>Methanosarcinales</taxon>
        <taxon>Methanosarcinaceae</taxon>
        <taxon>Methanosarcina</taxon>
    </lineage>
</organism>
<accession>Q50227</accession>
<accession>F1SVH0</accession>
<accession>Q7LWL5</accession>
<keyword id="KW-1003">Cell membrane</keyword>
<keyword id="KW-0249">Electron transport</keyword>
<keyword id="KW-0349">Heme</keyword>
<keyword id="KW-0408">Iron</keyword>
<keyword id="KW-0472">Membrane</keyword>
<keyword id="KW-0479">Metal-binding</keyword>
<keyword id="KW-0484">Methanogenesis</keyword>
<keyword id="KW-0560">Oxidoreductase</keyword>
<keyword id="KW-0812">Transmembrane</keyword>
<keyword id="KW-1133">Transmembrane helix</keyword>
<keyword id="KW-0813">Transport</keyword>
<proteinExistence type="evidence at transcript level"/>
<reference key="1">
    <citation type="journal article" date="1995" name="Eur. J. Biochem.">
        <title>Analysis of the vhoGAC and vhtGAC operons from Methanosarcina mazei strain Go1, both encoding a membrane-bound hydrogenase and a cytochrome b.</title>
        <authorList>
            <person name="Deppenmeier U."/>
            <person name="Blaut M."/>
            <person name="Lentes S."/>
            <person name="Herzberg C."/>
            <person name="Gottschalk G."/>
        </authorList>
    </citation>
    <scope>NUCLEOTIDE SEQUENCE [GENOMIC DNA]</scope>
    <scope>INDUCTION</scope>
    <source>
        <strain>ATCC BAA-159 / DSM 3647 / Goe1 / Go1 / JCM 11833 / OCM 88</strain>
    </source>
</reference>
<reference key="2">
    <citation type="journal article" date="2002" name="J. Mol. Microbiol. Biotechnol.">
        <title>The genome of Methanosarcina mazei: evidence for lateral gene transfer between Bacteria and Archaea.</title>
        <authorList>
            <person name="Deppenmeier U."/>
            <person name="Johann A."/>
            <person name="Hartsch T."/>
            <person name="Merkl R."/>
            <person name="Schmitz R.A."/>
            <person name="Martinez-Arias R."/>
            <person name="Henne A."/>
            <person name="Wiezer A."/>
            <person name="Baeumer S."/>
            <person name="Jacobi C."/>
            <person name="Brueggemann H."/>
            <person name="Lienard T."/>
            <person name="Christmann A."/>
            <person name="Boemecke M."/>
            <person name="Steckel S."/>
            <person name="Bhattacharyya A."/>
            <person name="Lykidis A."/>
            <person name="Overbeek R."/>
            <person name="Klenk H.-P."/>
            <person name="Gunsalus R.P."/>
            <person name="Fritz H.-J."/>
            <person name="Gottschalk G."/>
        </authorList>
    </citation>
    <scope>NUCLEOTIDE SEQUENCE [LARGE SCALE GENOMIC DNA]</scope>
    <source>
        <strain>ATCC BAA-159 / DSM 3647 / Goe1 / Go1 / JCM 11833 / OCM 88</strain>
    </source>
</reference>
<reference key="3">
    <citation type="journal article" date="2014" name="Biochim. Biophys. Acta">
        <title>Bioenergetics and anaerobic respiratory chains of aceticlastic methanogens.</title>
        <authorList>
            <person name="Welte C."/>
            <person name="Deppenmeier U."/>
        </authorList>
    </citation>
    <scope>PROBABLE FUNCTION</scope>
    <scope>REVIEW</scope>
</reference>
<name>VHTC_METMA</name>
<protein>
    <recommendedName>
        <fullName evidence="5">F420 non-reducing hydrogenase II cytochrome subunit</fullName>
        <ecNumber evidence="6">1.12.98.3</ecNumber>
    </recommendedName>
    <alternativeName>
        <fullName evidence="5">F420-nonreactive hydrogenase II cytochrome subunit</fullName>
    </alternativeName>
    <alternativeName>
        <fullName evidence="5">Methanosarcina-phenazine hydrogenase II cytochrome subunit</fullName>
    </alternativeName>
</protein>
<sequence length="270" mass="31132">MKSNNNPKTMVVERYTITDRIAHTVHAIAMIVLIITGLKIYAGWEFMSFHTARTLHMIAVPFLLAVNWILIPYNIFSEGHGLMGKISHFVDHYIFGPKDLARLVGIIKNFFGKGEYPAFTVYDEKTGHYKTKLHPLMKILIPLEGLALFLITVSGIVLYKLDWSLFGLPVAQWIISISGMIAPTFGMTPVGFLRVLHLLMTYWFIFELVVHVGILEFDPRVWKYYKAIFWSGKEDLSDRHFVEVARNNPNHLPDRELWRDPSDKPSEVKE</sequence>
<comment type="function">
    <text evidence="2">Part of the F420 non-reducing hydrogenase II complex that catalyzes the reduction of methanophenazine to dihydromethanophenazine.</text>
</comment>
<comment type="catalytic activity">
    <reaction evidence="6">
        <text>methanophenazine + H2 = dihydromethanophenazine</text>
        <dbReference type="Rhea" id="RHEA:24436"/>
        <dbReference type="ChEBI" id="CHEBI:18276"/>
        <dbReference type="ChEBI" id="CHEBI:29118"/>
        <dbReference type="ChEBI" id="CHEBI:50375"/>
        <dbReference type="EC" id="1.12.98.3"/>
    </reaction>
</comment>
<comment type="cofactor">
    <cofactor evidence="6">
        <name>heme b</name>
        <dbReference type="ChEBI" id="CHEBI:60344"/>
    </cofactor>
</comment>
<comment type="subunit">
    <text evidence="6 7">Composed of a large subunit (VhtA), a small subunit (VhtG) and a cytochrome subunit (VhtC).</text>
</comment>
<comment type="subcellular location">
    <subcellularLocation>
        <location evidence="6">Cell membrane</location>
        <topology evidence="1">Multi-pass membrane protein</topology>
    </subcellularLocation>
</comment>
<comment type="induction">
    <text evidence="3">Expressed in methanol-grown cells.</text>
</comment>
<comment type="similarity">
    <text evidence="5">Belongs to the HupC/HyaC/HydC family.</text>
</comment>
<gene>
    <name evidence="4" type="primary">vhtC</name>
    <name evidence="8" type="ordered locus">MM_2171</name>
</gene>
<feature type="chain" id="PRO_0000459032" description="F420 non-reducing hydrogenase II cytochrome subunit">
    <location>
        <begin position="1"/>
        <end position="270"/>
    </location>
</feature>
<feature type="transmembrane region" description="Helical" evidence="1">
    <location>
        <begin position="27"/>
        <end position="47"/>
    </location>
</feature>
<feature type="transmembrane region" description="Helical" evidence="1">
    <location>
        <begin position="57"/>
        <end position="77"/>
    </location>
</feature>
<feature type="transmembrane region" description="Helical" evidence="1">
    <location>
        <begin position="139"/>
        <end position="159"/>
    </location>
</feature>
<feature type="transmembrane region" description="Helical" evidence="1">
    <location>
        <begin position="173"/>
        <end position="193"/>
    </location>
</feature>
<feature type="transmembrane region" description="Helical" evidence="1">
    <location>
        <begin position="195"/>
        <end position="215"/>
    </location>
</feature>
<evidence type="ECO:0000255" key="1"/>
<evidence type="ECO:0000269" key="2">
    <source>
    </source>
</evidence>
<evidence type="ECO:0000269" key="3">
    <source>
    </source>
</evidence>
<evidence type="ECO:0000303" key="4">
    <source>
    </source>
</evidence>
<evidence type="ECO:0000305" key="5"/>
<evidence type="ECO:0000305" key="6">
    <source>
    </source>
</evidence>
<evidence type="ECO:0000305" key="7">
    <source>
    </source>
</evidence>
<evidence type="ECO:0000312" key="8">
    <source>
        <dbReference type="EMBL" id="AAM31867.1"/>
    </source>
</evidence>
<dbReference type="EC" id="1.12.98.3" evidence="6"/>
<dbReference type="EMBL" id="X83112">
    <property type="protein sequence ID" value="CAA58178.1"/>
    <property type="molecule type" value="Genomic_DNA"/>
</dbReference>
<dbReference type="EMBL" id="AE008384">
    <property type="protein sequence ID" value="AAM31867.1"/>
    <property type="molecule type" value="Genomic_DNA"/>
</dbReference>
<dbReference type="PIR" id="S67479">
    <property type="entry name" value="S67479"/>
</dbReference>
<dbReference type="RefSeq" id="WP_011034102.1">
    <property type="nucleotide sequence ID" value="NC_003901.1"/>
</dbReference>
<dbReference type="KEGG" id="mma:MM_2171"/>
<dbReference type="PATRIC" id="fig|192952.21.peg.2487"/>
<dbReference type="eggNOG" id="arCOG02478">
    <property type="taxonomic scope" value="Archaea"/>
</dbReference>
<dbReference type="HOGENOM" id="CLU_095572_0_0_2"/>
<dbReference type="Proteomes" id="UP000000595">
    <property type="component" value="Chromosome"/>
</dbReference>
<dbReference type="GO" id="GO:0005886">
    <property type="term" value="C:plasma membrane"/>
    <property type="evidence" value="ECO:0007669"/>
    <property type="project" value="UniProtKB-SubCell"/>
</dbReference>
<dbReference type="GO" id="GO:0046872">
    <property type="term" value="F:metal ion binding"/>
    <property type="evidence" value="ECO:0007669"/>
    <property type="project" value="UniProtKB-KW"/>
</dbReference>
<dbReference type="GO" id="GO:0016491">
    <property type="term" value="F:oxidoreductase activity"/>
    <property type="evidence" value="ECO:0007669"/>
    <property type="project" value="UniProtKB-KW"/>
</dbReference>
<dbReference type="GO" id="GO:0015948">
    <property type="term" value="P:methanogenesis"/>
    <property type="evidence" value="ECO:0007669"/>
    <property type="project" value="UniProtKB-KW"/>
</dbReference>
<dbReference type="GO" id="GO:0022904">
    <property type="term" value="P:respiratory electron transport chain"/>
    <property type="evidence" value="ECO:0007669"/>
    <property type="project" value="InterPro"/>
</dbReference>
<dbReference type="Gene3D" id="1.20.950.20">
    <property type="entry name" value="Transmembrane di-heme cytochromes, Chain C"/>
    <property type="match status" value="1"/>
</dbReference>
<dbReference type="InterPro" id="IPR016174">
    <property type="entry name" value="Di-haem_cyt_TM"/>
</dbReference>
<dbReference type="SUPFAM" id="SSF81342">
    <property type="entry name" value="Transmembrane di-heme cytochromes"/>
    <property type="match status" value="1"/>
</dbReference>